<dbReference type="EC" id="3.1.-.-" evidence="1"/>
<dbReference type="EMBL" id="AAEY01000021">
    <property type="protein sequence ID" value="EAL21135.1"/>
    <property type="molecule type" value="Genomic_DNA"/>
</dbReference>
<dbReference type="RefSeq" id="XP_775782.1">
    <property type="nucleotide sequence ID" value="XM_770689.1"/>
</dbReference>
<dbReference type="SMR" id="P0CS61"/>
<dbReference type="EnsemblFungi" id="AAW43099">
    <property type="protein sequence ID" value="AAW43099"/>
    <property type="gene ID" value="CND01190"/>
</dbReference>
<dbReference type="GeneID" id="4935900"/>
<dbReference type="KEGG" id="cnb:CNBD5110"/>
<dbReference type="VEuPathDB" id="FungiDB:CNBD5110"/>
<dbReference type="HOGENOM" id="CLU_032444_1_1_1"/>
<dbReference type="OrthoDB" id="7271at5206"/>
<dbReference type="GO" id="GO:0005829">
    <property type="term" value="C:cytosol"/>
    <property type="evidence" value="ECO:0007669"/>
    <property type="project" value="EnsemblFungi"/>
</dbReference>
<dbReference type="GO" id="GO:0005739">
    <property type="term" value="C:mitochondrion"/>
    <property type="evidence" value="ECO:0007669"/>
    <property type="project" value="UniProtKB-SubCell"/>
</dbReference>
<dbReference type="GO" id="GO:0005730">
    <property type="term" value="C:nucleolus"/>
    <property type="evidence" value="ECO:0007669"/>
    <property type="project" value="UniProtKB-SubCell"/>
</dbReference>
<dbReference type="GO" id="GO:0005654">
    <property type="term" value="C:nucleoplasm"/>
    <property type="evidence" value="ECO:0007669"/>
    <property type="project" value="UniProtKB-SubCell"/>
</dbReference>
<dbReference type="GO" id="GO:0008409">
    <property type="term" value="F:5'-3' exonuclease activity"/>
    <property type="evidence" value="ECO:0007669"/>
    <property type="project" value="UniProtKB-UniRule"/>
</dbReference>
<dbReference type="GO" id="GO:0017108">
    <property type="term" value="F:5'-flap endonuclease activity"/>
    <property type="evidence" value="ECO:0007669"/>
    <property type="project" value="UniProtKB-UniRule"/>
</dbReference>
<dbReference type="GO" id="GO:0003677">
    <property type="term" value="F:DNA binding"/>
    <property type="evidence" value="ECO:0007669"/>
    <property type="project" value="UniProtKB-UniRule"/>
</dbReference>
<dbReference type="GO" id="GO:0000287">
    <property type="term" value="F:magnesium ion binding"/>
    <property type="evidence" value="ECO:0007669"/>
    <property type="project" value="UniProtKB-UniRule"/>
</dbReference>
<dbReference type="GO" id="GO:0006284">
    <property type="term" value="P:base-excision repair"/>
    <property type="evidence" value="ECO:0007669"/>
    <property type="project" value="UniProtKB-UniRule"/>
</dbReference>
<dbReference type="GO" id="GO:0043137">
    <property type="term" value="P:DNA replication, removal of RNA primer"/>
    <property type="evidence" value="ECO:0007669"/>
    <property type="project" value="UniProtKB-UniRule"/>
</dbReference>
<dbReference type="GO" id="GO:0006303">
    <property type="term" value="P:double-strand break repair via nonhomologous end joining"/>
    <property type="evidence" value="ECO:0007669"/>
    <property type="project" value="EnsemblFungi"/>
</dbReference>
<dbReference type="GO" id="GO:0007534">
    <property type="term" value="P:gene conversion at mating-type locus"/>
    <property type="evidence" value="ECO:0007669"/>
    <property type="project" value="EnsemblFungi"/>
</dbReference>
<dbReference type="GO" id="GO:0035753">
    <property type="term" value="P:maintenance of DNA trinucleotide repeats"/>
    <property type="evidence" value="ECO:0007669"/>
    <property type="project" value="EnsemblFungi"/>
</dbReference>
<dbReference type="CDD" id="cd09907">
    <property type="entry name" value="H3TH_FEN1-Euk"/>
    <property type="match status" value="1"/>
</dbReference>
<dbReference type="CDD" id="cd09867">
    <property type="entry name" value="PIN_FEN1"/>
    <property type="match status" value="1"/>
</dbReference>
<dbReference type="FunFam" id="1.10.150.20:FF:000071">
    <property type="entry name" value="Flap endonuclease 1"/>
    <property type="match status" value="1"/>
</dbReference>
<dbReference type="FunFam" id="3.40.50.1010:FF:000003">
    <property type="entry name" value="Flap endonuclease 1"/>
    <property type="match status" value="1"/>
</dbReference>
<dbReference type="Gene3D" id="1.10.150.20">
    <property type="entry name" value="5' to 3' exonuclease, C-terminal subdomain"/>
    <property type="match status" value="1"/>
</dbReference>
<dbReference type="Gene3D" id="3.40.50.1010">
    <property type="entry name" value="5'-nuclease"/>
    <property type="match status" value="1"/>
</dbReference>
<dbReference type="HAMAP" id="MF_00614">
    <property type="entry name" value="Fen"/>
    <property type="match status" value="1"/>
</dbReference>
<dbReference type="InterPro" id="IPR036279">
    <property type="entry name" value="5-3_exonuclease_C_sf"/>
</dbReference>
<dbReference type="InterPro" id="IPR023426">
    <property type="entry name" value="Flap_endonuc"/>
</dbReference>
<dbReference type="InterPro" id="IPR008918">
    <property type="entry name" value="HhH2"/>
</dbReference>
<dbReference type="InterPro" id="IPR029060">
    <property type="entry name" value="PIN-like_dom_sf"/>
</dbReference>
<dbReference type="InterPro" id="IPR006086">
    <property type="entry name" value="XPG-I_dom"/>
</dbReference>
<dbReference type="InterPro" id="IPR006084">
    <property type="entry name" value="XPG/Rad2"/>
</dbReference>
<dbReference type="InterPro" id="IPR019974">
    <property type="entry name" value="XPG_CS"/>
</dbReference>
<dbReference type="InterPro" id="IPR006085">
    <property type="entry name" value="XPG_DNA_repair_N"/>
</dbReference>
<dbReference type="PANTHER" id="PTHR11081:SF9">
    <property type="entry name" value="FLAP ENDONUCLEASE 1"/>
    <property type="match status" value="1"/>
</dbReference>
<dbReference type="PANTHER" id="PTHR11081">
    <property type="entry name" value="FLAP ENDONUCLEASE FAMILY MEMBER"/>
    <property type="match status" value="1"/>
</dbReference>
<dbReference type="Pfam" id="PF00867">
    <property type="entry name" value="XPG_I"/>
    <property type="match status" value="1"/>
</dbReference>
<dbReference type="Pfam" id="PF00752">
    <property type="entry name" value="XPG_N"/>
    <property type="match status" value="1"/>
</dbReference>
<dbReference type="PRINTS" id="PR00853">
    <property type="entry name" value="XPGRADSUPER"/>
</dbReference>
<dbReference type="SMART" id="SM00279">
    <property type="entry name" value="HhH2"/>
    <property type="match status" value="1"/>
</dbReference>
<dbReference type="SMART" id="SM00484">
    <property type="entry name" value="XPGI"/>
    <property type="match status" value="1"/>
</dbReference>
<dbReference type="SMART" id="SM00485">
    <property type="entry name" value="XPGN"/>
    <property type="match status" value="1"/>
</dbReference>
<dbReference type="SUPFAM" id="SSF47807">
    <property type="entry name" value="5' to 3' exonuclease, C-terminal subdomain"/>
    <property type="match status" value="1"/>
</dbReference>
<dbReference type="SUPFAM" id="SSF88723">
    <property type="entry name" value="PIN domain-like"/>
    <property type="match status" value="1"/>
</dbReference>
<dbReference type="PROSITE" id="PS00841">
    <property type="entry name" value="XPG_1"/>
    <property type="match status" value="1"/>
</dbReference>
<dbReference type="PROSITE" id="PS00842">
    <property type="entry name" value="XPG_2"/>
    <property type="match status" value="1"/>
</dbReference>
<keyword id="KW-0227">DNA damage</keyword>
<keyword id="KW-0234">DNA repair</keyword>
<keyword id="KW-0235">DNA replication</keyword>
<keyword id="KW-0255">Endonuclease</keyword>
<keyword id="KW-0269">Exonuclease</keyword>
<keyword id="KW-0378">Hydrolase</keyword>
<keyword id="KW-0460">Magnesium</keyword>
<keyword id="KW-0479">Metal-binding</keyword>
<keyword id="KW-0496">Mitochondrion</keyword>
<keyword id="KW-0540">Nuclease</keyword>
<keyword id="KW-0539">Nucleus</keyword>
<keyword id="KW-0597">Phosphoprotein</keyword>
<gene>
    <name evidence="1" type="primary">FEN1</name>
    <name type="ordered locus">CNBD5110</name>
</gene>
<feature type="chain" id="PRO_0000410343" description="Flap endonuclease 1">
    <location>
        <begin position="1"/>
        <end position="453"/>
    </location>
</feature>
<feature type="region of interest" description="N-domain">
    <location>
        <begin position="1"/>
        <end position="105"/>
    </location>
</feature>
<feature type="region of interest" description="I-domain">
    <location>
        <begin position="123"/>
        <end position="254"/>
    </location>
</feature>
<feature type="region of interest" description="Disordered" evidence="2">
    <location>
        <begin position="273"/>
        <end position="336"/>
    </location>
</feature>
<feature type="region of interest" description="Interaction with PCNA" evidence="1">
    <location>
        <begin position="406"/>
        <end position="414"/>
    </location>
</feature>
<feature type="region of interest" description="Disordered" evidence="2">
    <location>
        <begin position="409"/>
        <end position="453"/>
    </location>
</feature>
<feature type="compositionally biased region" description="Basic residues" evidence="2">
    <location>
        <begin position="320"/>
        <end position="333"/>
    </location>
</feature>
<feature type="compositionally biased region" description="Basic and acidic residues" evidence="2">
    <location>
        <begin position="417"/>
        <end position="446"/>
    </location>
</feature>
<feature type="binding site" evidence="1">
    <location>
        <position position="34"/>
    </location>
    <ligand>
        <name>Mg(2+)</name>
        <dbReference type="ChEBI" id="CHEBI:18420"/>
        <label>1</label>
    </ligand>
</feature>
<feature type="binding site" evidence="1">
    <location>
        <position position="47"/>
    </location>
    <ligand>
        <name>DNA</name>
        <dbReference type="ChEBI" id="CHEBI:16991"/>
    </ligand>
</feature>
<feature type="binding site" evidence="1">
    <location>
        <position position="71"/>
    </location>
    <ligand>
        <name>DNA</name>
        <dbReference type="ChEBI" id="CHEBI:16991"/>
    </ligand>
</feature>
<feature type="binding site" evidence="1">
    <location>
        <position position="87"/>
    </location>
    <ligand>
        <name>Mg(2+)</name>
        <dbReference type="ChEBI" id="CHEBI:18420"/>
        <label>1</label>
    </ligand>
</feature>
<feature type="binding site" evidence="1">
    <location>
        <position position="159"/>
    </location>
    <ligand>
        <name>DNA</name>
        <dbReference type="ChEBI" id="CHEBI:16991"/>
    </ligand>
</feature>
<feature type="binding site" evidence="1">
    <location>
        <position position="159"/>
    </location>
    <ligand>
        <name>Mg(2+)</name>
        <dbReference type="ChEBI" id="CHEBI:18420"/>
        <label>1</label>
    </ligand>
</feature>
<feature type="binding site" evidence="1">
    <location>
        <position position="161"/>
    </location>
    <ligand>
        <name>Mg(2+)</name>
        <dbReference type="ChEBI" id="CHEBI:18420"/>
        <label>1</label>
    </ligand>
</feature>
<feature type="binding site" evidence="1">
    <location>
        <position position="180"/>
    </location>
    <ligand>
        <name>Mg(2+)</name>
        <dbReference type="ChEBI" id="CHEBI:18420"/>
        <label>2</label>
    </ligand>
</feature>
<feature type="binding site" evidence="1">
    <location>
        <position position="182"/>
    </location>
    <ligand>
        <name>Mg(2+)</name>
        <dbReference type="ChEBI" id="CHEBI:18420"/>
        <label>2</label>
    </ligand>
</feature>
<feature type="binding site" evidence="1">
    <location>
        <position position="232"/>
    </location>
    <ligand>
        <name>DNA</name>
        <dbReference type="ChEBI" id="CHEBI:16991"/>
    </ligand>
</feature>
<feature type="binding site" evidence="1">
    <location>
        <position position="234"/>
    </location>
    <ligand>
        <name>DNA</name>
        <dbReference type="ChEBI" id="CHEBI:16991"/>
    </ligand>
</feature>
<feature type="binding site" evidence="1">
    <location>
        <position position="234"/>
    </location>
    <ligand>
        <name>Mg(2+)</name>
        <dbReference type="ChEBI" id="CHEBI:18420"/>
        <label>2</label>
    </ligand>
</feature>
<sequence length="453" mass="50154">MGIKGLTGLLSENAPKCMKDHEMKTLFGRKVAIDASMSIYQFLIAVRQQDGQMLMNESGDVTSHLMGFFYRTIRMVDHGIKPCYIFDGKPPELKGSVLAKRFARREEAKEGEEEAKETGTAEDVDKLARRQVRVTREHNEECKKLLSLMGIPVVTAPGEAEAQCAELARAGKVYAAGSEDMDTLTFNSPILLRHLTFSEAKKMPISEIHLDVALRDLEMSMDQFIELCILLGCDYLEPCKGIGPKTALKLMREHGTLGKVVEHIRGKMAEKAEEIKAAADEEAEAEAEAEKYDSDPESEEGGETMINSDGEEVPAPSKLKSPKKKAPAKKKKVASSGMQIPEFWPWEEAKQLFMKPDVVNGDDLVLEWKQPDTEGLVEFLCRDKGFNEDRVRAGAAKLSKMLAAKQQGRLDGFFTVKPKEPAAKDTGKGKGKATKGEKRKAEEKGSAKKKSKN</sequence>
<proteinExistence type="inferred from homology"/>
<reference key="1">
    <citation type="journal article" date="2005" name="Science">
        <title>The genome of the basidiomycetous yeast and human pathogen Cryptococcus neoformans.</title>
        <authorList>
            <person name="Loftus B.J."/>
            <person name="Fung E."/>
            <person name="Roncaglia P."/>
            <person name="Rowley D."/>
            <person name="Amedeo P."/>
            <person name="Bruno D."/>
            <person name="Vamathevan J."/>
            <person name="Miranda M."/>
            <person name="Anderson I.J."/>
            <person name="Fraser J.A."/>
            <person name="Allen J.E."/>
            <person name="Bosdet I.E."/>
            <person name="Brent M.R."/>
            <person name="Chiu R."/>
            <person name="Doering T.L."/>
            <person name="Donlin M.J."/>
            <person name="D'Souza C.A."/>
            <person name="Fox D.S."/>
            <person name="Grinberg V."/>
            <person name="Fu J."/>
            <person name="Fukushima M."/>
            <person name="Haas B.J."/>
            <person name="Huang J.C."/>
            <person name="Janbon G."/>
            <person name="Jones S.J.M."/>
            <person name="Koo H.L."/>
            <person name="Krzywinski M.I."/>
            <person name="Kwon-Chung K.J."/>
            <person name="Lengeler K.B."/>
            <person name="Maiti R."/>
            <person name="Marra M.A."/>
            <person name="Marra R.E."/>
            <person name="Mathewson C.A."/>
            <person name="Mitchell T.G."/>
            <person name="Pertea M."/>
            <person name="Riggs F.R."/>
            <person name="Salzberg S.L."/>
            <person name="Schein J.E."/>
            <person name="Shvartsbeyn A."/>
            <person name="Shin H."/>
            <person name="Shumway M."/>
            <person name="Specht C.A."/>
            <person name="Suh B.B."/>
            <person name="Tenney A."/>
            <person name="Utterback T.R."/>
            <person name="Wickes B.L."/>
            <person name="Wortman J.R."/>
            <person name="Wye N.H."/>
            <person name="Kronstad J.W."/>
            <person name="Lodge J.K."/>
            <person name="Heitman J."/>
            <person name="Davis R.W."/>
            <person name="Fraser C.M."/>
            <person name="Hyman R.W."/>
        </authorList>
    </citation>
    <scope>NUCLEOTIDE SEQUENCE [LARGE SCALE GENOMIC DNA]</scope>
    <source>
        <strain>B-3501A</strain>
    </source>
</reference>
<accession>P0CS61</accession>
<accession>Q55TE2</accession>
<accession>Q5KIZ6</accession>
<protein>
    <recommendedName>
        <fullName evidence="1">Flap endonuclease 1</fullName>
        <shortName evidence="1">FEN-1</shortName>
        <ecNumber evidence="1">3.1.-.-</ecNumber>
    </recommendedName>
    <alternativeName>
        <fullName evidence="1">Flap structure-specific endonuclease 1</fullName>
    </alternativeName>
</protein>
<name>FEN1_CRYNB</name>
<comment type="function">
    <text evidence="1">Structure-specific nuclease with 5'-flap endonuclease and 5'-3' exonuclease activities involved in DNA replication and repair. During DNA replication, cleaves the 5'-overhanging flap structure that is generated by displacement synthesis when DNA polymerase encounters the 5'-end of a downstream Okazaki fragment. It enters the flap from the 5'-end and then tracks to cleave the flap base, leaving a nick for ligation. Also involved in the long patch base excision repair (LP-BER) pathway, by cleaving within the apurinic/apyrimidinic (AP) site-terminated flap. Acts as a genome stabilization factor that prevents flaps from equilibrating into structures that lead to duplications and deletions. Also possesses 5'-3' exonuclease activity on nicked or gapped double-stranded DNA, and exhibits RNase H activity. Also involved in replication and repair of rDNA and in repairing mitochondrial DNA.</text>
</comment>
<comment type="cofactor">
    <cofactor evidence="1">
        <name>Mg(2+)</name>
        <dbReference type="ChEBI" id="CHEBI:18420"/>
    </cofactor>
    <text evidence="1">Binds 2 magnesium ions per subunit. They probably participate in the reaction catalyzed by the enzyme. May bind an additional third magnesium ion after substrate binding.</text>
</comment>
<comment type="subunit">
    <text evidence="1">Interacts with PCNA. Three molecules of FEN1 bind to one PCNA trimer with each molecule binding to one PCNA monomer. PCNA stimulates the nuclease activity without altering cleavage specificity.</text>
</comment>
<comment type="subcellular location">
    <subcellularLocation>
        <location evidence="1">Nucleus</location>
        <location evidence="1">Nucleolus</location>
    </subcellularLocation>
    <subcellularLocation>
        <location evidence="1">Nucleus</location>
        <location evidence="1">Nucleoplasm</location>
    </subcellularLocation>
    <subcellularLocation>
        <location evidence="1">Mitochondrion</location>
    </subcellularLocation>
    <text evidence="1">Resides mostly in the nucleoli and relocalizes to the nucleoplasm upon DNA damage.</text>
</comment>
<comment type="PTM">
    <text evidence="1">Phosphorylated. Phosphorylation upon DNA damage induces relocalization to the nuclear plasma.</text>
</comment>
<comment type="similarity">
    <text evidence="1">Belongs to the XPG/RAD2 endonuclease family. FEN1 subfamily.</text>
</comment>
<organism>
    <name type="scientific">Cryptococcus neoformans var. neoformans serotype D (strain B-3501A)</name>
    <name type="common">Filobasidiella neoformans</name>
    <dbReference type="NCBI Taxonomy" id="283643"/>
    <lineage>
        <taxon>Eukaryota</taxon>
        <taxon>Fungi</taxon>
        <taxon>Dikarya</taxon>
        <taxon>Basidiomycota</taxon>
        <taxon>Agaricomycotina</taxon>
        <taxon>Tremellomycetes</taxon>
        <taxon>Tremellales</taxon>
        <taxon>Cryptococcaceae</taxon>
        <taxon>Cryptococcus</taxon>
        <taxon>Cryptococcus neoformans species complex</taxon>
    </lineage>
</organism>
<evidence type="ECO:0000255" key="1">
    <source>
        <dbReference type="HAMAP-Rule" id="MF_03140"/>
    </source>
</evidence>
<evidence type="ECO:0000256" key="2">
    <source>
        <dbReference type="SAM" id="MobiDB-lite"/>
    </source>
</evidence>